<keyword id="KW-0167">Capsid protein</keyword>
<keyword id="KW-1185">Reference proteome</keyword>
<keyword id="KW-1140">T=1 icosahedral capsid protein</keyword>
<keyword id="KW-0946">Virion</keyword>
<sequence length="723" mass="85394">MPWWPWRRWRRWRRRRGNWRRRVAPRRYRRTARRARRRRKAVRRRRRRRVRRRGYYRRYRRRRRYKRRLLILKQWQPTTNLRLTVKGLIPVVVMGKGKTQNNFGQWEQTVPLEGESYGGSFTIRKFTLQTLYEDYLKLRNRWSRSNTDLELIRYTGLNLRLYRHEFSDYIVHYSLETPMEVGLESHMLAHPLKMIMSSKHVTVPSLLTKKGGRRYLRLKIPPPKLMMTQWYFQKEFCQVGLVLLSISTATLMHPWMAPFVNSPALTIYAVNHKTYSDMSILPSNNQGSTKNELIETLYTAEHTYNPMAQRIWGNIKPQNTNFTPENYWNKWNEIHTKIKTNRQSELTQLKQMRKRLELTTENDYQDPNFGLSYGLYSPLLLYPEMYFPEQSKVYQKARYNPLLDQGIGNVVWTEPLTKKTCDYASQAYNVIKDAPLYLALFGYIDICSKLAKDKSFYLSNRVCVKCPYTVPQLLSKTNATLGHVILSENFMRGLVPSKDSYVPLYMRGKWYPSIYHQEEVIEAIVSSGPFVPRDQITKSLDITIGCRFGFRIGGNLLNPKQVGDPCKQPTHPLPAPGGGDLLRAVQVSDPRKVGIQFHPWDLRRGMLSTSSIKRMLQDSDDDESIEFPPKAWPGDPVPVGRTLEERCSSSLYHLLQEQATPPPFKKPRTEDQEENPEETTQLQLFQELQRQRELQLQLKRGFRGLVEEMIKSHRHLALDPYLK</sequence>
<organism>
    <name type="scientific">Torque teno virus (isolate Japanese macaque/Japan/Mf-TTV9/2000)</name>
    <name type="common">TTV</name>
    <dbReference type="NCBI Taxonomy" id="687364"/>
    <lineage>
        <taxon>Viruses</taxon>
        <taxon>Viruses incertae sedis</taxon>
        <taxon>Anelloviridae</taxon>
        <taxon>Alphatorquevirus</taxon>
        <taxon>Alphatorquevirus cerco7</taxon>
    </lineage>
</organism>
<organismHost>
    <name type="scientific">Homo sapiens</name>
    <name type="common">Human</name>
    <dbReference type="NCBI Taxonomy" id="9606"/>
</organismHost>
<feature type="chain" id="PRO_0000315334" description="Capsid protein">
    <location>
        <begin position="1"/>
        <end position="723"/>
    </location>
</feature>
<feature type="region of interest" description="Disordered" evidence="2">
    <location>
        <begin position="658"/>
        <end position="679"/>
    </location>
</feature>
<accession>Q9DUC4</accession>
<dbReference type="EMBL" id="AB041959">
    <property type="protein sequence ID" value="BAB19313.1"/>
    <property type="molecule type" value="Genomic_DNA"/>
</dbReference>
<dbReference type="RefSeq" id="YP_003587873.1">
    <property type="nucleotide sequence ID" value="NC_014083.1"/>
</dbReference>
<dbReference type="SMR" id="Q9DUC4"/>
<dbReference type="KEGG" id="vg:9086634"/>
<dbReference type="OrthoDB" id="3295at10239"/>
<dbReference type="Proteomes" id="UP000008261">
    <property type="component" value="Genome"/>
</dbReference>
<dbReference type="GO" id="GO:0039615">
    <property type="term" value="C:T=1 icosahedral viral capsid"/>
    <property type="evidence" value="ECO:0007669"/>
    <property type="project" value="UniProtKB-KW"/>
</dbReference>
<dbReference type="InterPro" id="IPR004219">
    <property type="entry name" value="TTvirus_Unk"/>
</dbReference>
<dbReference type="Pfam" id="PF02956">
    <property type="entry name" value="TT_ORF1"/>
    <property type="match status" value="1"/>
</dbReference>
<name>CAPSD_TTVV9</name>
<comment type="function">
    <text evidence="1">Self assemble to form an icosahedral capsid.</text>
</comment>
<comment type="subcellular location">
    <subcellularLocation>
        <location evidence="3">Virion</location>
    </subcellularLocation>
</comment>
<comment type="similarity">
    <text evidence="3">Belongs to the anelloviridae capsid protein family.</text>
</comment>
<evidence type="ECO:0000250" key="1"/>
<evidence type="ECO:0000256" key="2">
    <source>
        <dbReference type="SAM" id="MobiDB-lite"/>
    </source>
</evidence>
<evidence type="ECO:0000305" key="3"/>
<protein>
    <recommendedName>
        <fullName>Capsid protein</fullName>
    </recommendedName>
</protein>
<gene>
    <name type="ORF">ORF1</name>
</gene>
<proteinExistence type="inferred from homology"/>
<reference key="1">
    <citation type="journal article" date="2000" name="Virology">
        <title>Species-specific TT viruses in humans and nonhuman primates and their phylogenetic relatedness.</title>
        <authorList>
            <person name="Okamoto H."/>
            <person name="Nishizawa T."/>
            <person name="Tawara A."/>
            <person name="Peng Y."/>
            <person name="Takahashi M."/>
            <person name="Kishimoto J."/>
            <person name="Tanaka T."/>
            <person name="Miyakawa Y."/>
            <person name="Mayumi M."/>
        </authorList>
    </citation>
    <scope>NUCLEOTIDE SEQUENCE [GENOMIC DNA]</scope>
</reference>
<reference key="2">
    <citation type="journal article" date="2007" name="Rev. Med. Virol.">
        <title>Torque teno virus (TTV): current status.</title>
        <authorList>
            <person name="Hino S."/>
            <person name="Miyata H."/>
        </authorList>
    </citation>
    <scope>REVIEW</scope>
</reference>